<gene>
    <name evidence="1" type="primary">torD</name>
    <name type="ordered locus">NT05HA_0851</name>
</gene>
<sequence>MLHHNQMVLMGLLNMLKISIQERQFVYSWICSLLSKELTQDQLAHYQRGDFDSLFAFLKELGFTEQTEQLIATLRPMEFQQLELAADFAHTFLLEGNISAIPYMSAYLQGEELGVALNLVDQWMTHYQLGVNREQNEPSDHVSVLLAILIRLIGEQPFHVQQDFAQKALLNWLPEFVRKANNTSCETKFYAMLCNLFLAFMTEDFAV</sequence>
<evidence type="ECO:0000255" key="1">
    <source>
        <dbReference type="HAMAP-Rule" id="MF_01150"/>
    </source>
</evidence>
<name>TORD_AGGAN</name>
<reference key="1">
    <citation type="journal article" date="2009" name="J. Bacteriol.">
        <title>Complete genome sequence of Aggregatibacter (Haemophilus) aphrophilus NJ8700.</title>
        <authorList>
            <person name="Di Bonaventura M.P."/>
            <person name="DeSalle R."/>
            <person name="Pop M."/>
            <person name="Nagarajan N."/>
            <person name="Figurski D.H."/>
            <person name="Fine D.H."/>
            <person name="Kaplan J.B."/>
            <person name="Planet P.J."/>
        </authorList>
    </citation>
    <scope>NUCLEOTIDE SEQUENCE [LARGE SCALE GENOMIC DNA]</scope>
    <source>
        <strain>NJ8700</strain>
    </source>
</reference>
<organism>
    <name type="scientific">Aggregatibacter aphrophilus (strain NJ8700)</name>
    <name type="common">Haemophilus aphrophilus</name>
    <dbReference type="NCBI Taxonomy" id="634176"/>
    <lineage>
        <taxon>Bacteria</taxon>
        <taxon>Pseudomonadati</taxon>
        <taxon>Pseudomonadota</taxon>
        <taxon>Gammaproteobacteria</taxon>
        <taxon>Pasteurellales</taxon>
        <taxon>Pasteurellaceae</taxon>
        <taxon>Aggregatibacter</taxon>
    </lineage>
</organism>
<dbReference type="EMBL" id="CP001607">
    <property type="protein sequence ID" value="ACS97236.1"/>
    <property type="molecule type" value="Genomic_DNA"/>
</dbReference>
<dbReference type="SMR" id="C6AN26"/>
<dbReference type="KEGG" id="aap:NT05HA_0851"/>
<dbReference type="HOGENOM" id="CLU_077650_4_0_6"/>
<dbReference type="GO" id="GO:0005737">
    <property type="term" value="C:cytoplasm"/>
    <property type="evidence" value="ECO:0007669"/>
    <property type="project" value="UniProtKB-SubCell"/>
</dbReference>
<dbReference type="GO" id="GO:0051259">
    <property type="term" value="P:protein complex oligomerization"/>
    <property type="evidence" value="ECO:0007669"/>
    <property type="project" value="InterPro"/>
</dbReference>
<dbReference type="GO" id="GO:0006457">
    <property type="term" value="P:protein folding"/>
    <property type="evidence" value="ECO:0007669"/>
    <property type="project" value="UniProtKB-UniRule"/>
</dbReference>
<dbReference type="Gene3D" id="1.20.120.1820">
    <property type="match status" value="1"/>
</dbReference>
<dbReference type="Gene3D" id="1.20.1280.20">
    <property type="entry name" value="HscB, C-terminal domain"/>
    <property type="match status" value="1"/>
</dbReference>
<dbReference type="HAMAP" id="MF_01150">
    <property type="entry name" value="TorD"/>
    <property type="match status" value="1"/>
</dbReference>
<dbReference type="InterPro" id="IPR023069">
    <property type="entry name" value="Chaperone_TorD"/>
</dbReference>
<dbReference type="InterPro" id="IPR020945">
    <property type="entry name" value="DMSO/NO3_reduct_chaperone"/>
</dbReference>
<dbReference type="InterPro" id="IPR036386">
    <property type="entry name" value="HscB_C_sf"/>
</dbReference>
<dbReference type="InterPro" id="IPR036411">
    <property type="entry name" value="TorD-like_sf"/>
</dbReference>
<dbReference type="InterPro" id="IPR050289">
    <property type="entry name" value="TorD/DmsD_chaperones"/>
</dbReference>
<dbReference type="NCBIfam" id="NF003442">
    <property type="entry name" value="PRK04976.1"/>
    <property type="match status" value="1"/>
</dbReference>
<dbReference type="PANTHER" id="PTHR34227:SF11">
    <property type="entry name" value="CHAPERONE PROTEIN TORD"/>
    <property type="match status" value="1"/>
</dbReference>
<dbReference type="PANTHER" id="PTHR34227">
    <property type="entry name" value="CHAPERONE PROTEIN YCDY"/>
    <property type="match status" value="1"/>
</dbReference>
<dbReference type="Pfam" id="PF02613">
    <property type="entry name" value="Nitrate_red_del"/>
    <property type="match status" value="1"/>
</dbReference>
<dbReference type="SUPFAM" id="SSF89155">
    <property type="entry name" value="TorD-like"/>
    <property type="match status" value="1"/>
</dbReference>
<feature type="chain" id="PRO_0000414892" description="Chaperone protein TorD">
    <location>
        <begin position="1"/>
        <end position="207"/>
    </location>
</feature>
<keyword id="KW-0143">Chaperone</keyword>
<keyword id="KW-0963">Cytoplasm</keyword>
<accession>C6AN26</accession>
<comment type="function">
    <text evidence="1">Involved in the biogenesis of TorA. Acts on TorA before the insertion of the molybdenum cofactor and, as a result, probably favors a conformation of the apoenzyme that is competent for acquiring the cofactor.</text>
</comment>
<comment type="subcellular location">
    <subcellularLocation>
        <location evidence="1">Cytoplasm</location>
    </subcellularLocation>
</comment>
<comment type="similarity">
    <text evidence="1">Belongs to the TorD/DmsD family. TorD subfamily.</text>
</comment>
<proteinExistence type="inferred from homology"/>
<protein>
    <recommendedName>
        <fullName evidence="1">Chaperone protein TorD</fullName>
    </recommendedName>
</protein>